<gene>
    <name evidence="1" type="primary">katG</name>
    <name type="ordered locus">VCM66_1501</name>
</gene>
<feature type="chain" id="PRO_1000189075" description="Catalase-peroxidase">
    <location>
        <begin position="1"/>
        <end position="724"/>
    </location>
</feature>
<feature type="active site" description="Proton acceptor" evidence="1">
    <location>
        <position position="99"/>
    </location>
</feature>
<feature type="binding site" description="axial binding residue" evidence="1">
    <location>
        <position position="267"/>
    </location>
    <ligand>
        <name>heme b</name>
        <dbReference type="ChEBI" id="CHEBI:60344"/>
    </ligand>
    <ligandPart>
        <name>Fe</name>
        <dbReference type="ChEBI" id="CHEBI:18248"/>
    </ligandPart>
</feature>
<feature type="site" description="Transition state stabilizer" evidence="1">
    <location>
        <position position="95"/>
    </location>
</feature>
<feature type="cross-link" description="Tryptophyl-tyrosyl-methioninium (Trp-Tyr) (with M-252)" evidence="1">
    <location>
        <begin position="98"/>
        <end position="226"/>
    </location>
</feature>
<feature type="cross-link" description="Tryptophyl-tyrosyl-methioninium (Tyr-Met) (with W-98)" evidence="1">
    <location>
        <begin position="226"/>
        <end position="252"/>
    </location>
</feature>
<organism>
    <name type="scientific">Vibrio cholerae serotype O1 (strain M66-2)</name>
    <dbReference type="NCBI Taxonomy" id="579112"/>
    <lineage>
        <taxon>Bacteria</taxon>
        <taxon>Pseudomonadati</taxon>
        <taxon>Pseudomonadota</taxon>
        <taxon>Gammaproteobacteria</taxon>
        <taxon>Vibrionales</taxon>
        <taxon>Vibrionaceae</taxon>
        <taxon>Vibrio</taxon>
    </lineage>
</organism>
<accession>C3LMN9</accession>
<sequence>MEHNKAGSSGQCPVMHGGLTSASMSNMDWWPKALNLDILHQHDSKTNPLGADFNYREELKKLDVEALKRDLKALMTNSQEWWPADWGHYGGLMIRMAWHSAGTYRIADGRGGGGTGNQRFAPLNSWPDNANLDKARRLLWPIKQKYGNKISWADLMILAGNMAYESMGLKTFGFAFGREDIWHPEKDIYWGSEKEWLAKSGGENSRYSGQRDLENPLAAVMMGLIYVNPEGVDGNPDPLKTAQDMRVTFARMAMNDEETVALTAGGHTVGKAHGNGKASNLGPDPEGAELHEQGLGWNNHTSRGIGRNTVTSGIEGAWTTHPTRWDNEYFYLLLSYEWQLTKSPAGAWQWEPVNIKEEDKPVDVEDPSIRYNPMMTDADMALKIDPEYRKISERFYKDPAYFSEVFARAWFKLTHRDMGPKARYFGPDVPAEDLIWQDPVPAGRKDYDVNAVKAKIAASGLSISEMVSTAWDSARTFRGSDKRGGANGARIRLAPQKDWEGNEPARLGKVLAVLEKIAAESGISIADTIVLAGNVGIEQAAKAAGVNVTVPFAPGRGDATIEQTDVESFEVLEPLADGFRNWQKKHYVVTPEEMLLDKAQLLRLTAPEMTVLIGGMRVLGTNYGGSQHGVFTDRVGALTNDFFVNLTDMSYTWKPTGRNSYEIVERKSGKVKWTATRVDLVFGSNSILRAYAEVYAQDDNKEKFVKDFVAAWTKVMNADRFDLV</sequence>
<dbReference type="EC" id="1.11.1.21" evidence="1"/>
<dbReference type="EMBL" id="CP001233">
    <property type="protein sequence ID" value="ACP05815.1"/>
    <property type="molecule type" value="Genomic_DNA"/>
</dbReference>
<dbReference type="RefSeq" id="WP_000400805.1">
    <property type="nucleotide sequence ID" value="NC_012578.1"/>
</dbReference>
<dbReference type="SMR" id="C3LMN9"/>
<dbReference type="KEGG" id="vcm:VCM66_1501"/>
<dbReference type="HOGENOM" id="CLU_025424_2_0_6"/>
<dbReference type="Proteomes" id="UP000001217">
    <property type="component" value="Chromosome I"/>
</dbReference>
<dbReference type="GO" id="GO:0005829">
    <property type="term" value="C:cytosol"/>
    <property type="evidence" value="ECO:0007669"/>
    <property type="project" value="TreeGrafter"/>
</dbReference>
<dbReference type="GO" id="GO:0004096">
    <property type="term" value="F:catalase activity"/>
    <property type="evidence" value="ECO:0007669"/>
    <property type="project" value="UniProtKB-UniRule"/>
</dbReference>
<dbReference type="GO" id="GO:0020037">
    <property type="term" value="F:heme binding"/>
    <property type="evidence" value="ECO:0007669"/>
    <property type="project" value="InterPro"/>
</dbReference>
<dbReference type="GO" id="GO:0046872">
    <property type="term" value="F:metal ion binding"/>
    <property type="evidence" value="ECO:0007669"/>
    <property type="project" value="UniProtKB-KW"/>
</dbReference>
<dbReference type="GO" id="GO:0070301">
    <property type="term" value="P:cellular response to hydrogen peroxide"/>
    <property type="evidence" value="ECO:0007669"/>
    <property type="project" value="TreeGrafter"/>
</dbReference>
<dbReference type="GO" id="GO:0042744">
    <property type="term" value="P:hydrogen peroxide catabolic process"/>
    <property type="evidence" value="ECO:0007669"/>
    <property type="project" value="UniProtKB-KW"/>
</dbReference>
<dbReference type="CDD" id="cd00649">
    <property type="entry name" value="catalase_peroxidase_1"/>
    <property type="match status" value="1"/>
</dbReference>
<dbReference type="CDD" id="cd08200">
    <property type="entry name" value="catalase_peroxidase_2"/>
    <property type="match status" value="1"/>
</dbReference>
<dbReference type="FunFam" id="1.10.420.10:FF:000002">
    <property type="entry name" value="Catalase-peroxidase"/>
    <property type="match status" value="1"/>
</dbReference>
<dbReference type="FunFam" id="1.10.420.10:FF:000004">
    <property type="entry name" value="Catalase-peroxidase"/>
    <property type="match status" value="1"/>
</dbReference>
<dbReference type="FunFam" id="1.10.520.10:FF:000002">
    <property type="entry name" value="Catalase-peroxidase"/>
    <property type="match status" value="1"/>
</dbReference>
<dbReference type="Gene3D" id="1.10.520.10">
    <property type="match status" value="2"/>
</dbReference>
<dbReference type="Gene3D" id="1.10.420.10">
    <property type="entry name" value="Peroxidase, domain 2"/>
    <property type="match status" value="2"/>
</dbReference>
<dbReference type="HAMAP" id="MF_01961">
    <property type="entry name" value="Catal_peroxid"/>
    <property type="match status" value="1"/>
</dbReference>
<dbReference type="InterPro" id="IPR000763">
    <property type="entry name" value="Catalase_peroxidase"/>
</dbReference>
<dbReference type="InterPro" id="IPR002016">
    <property type="entry name" value="Haem_peroxidase"/>
</dbReference>
<dbReference type="InterPro" id="IPR010255">
    <property type="entry name" value="Haem_peroxidase_sf"/>
</dbReference>
<dbReference type="InterPro" id="IPR019794">
    <property type="entry name" value="Peroxidases_AS"/>
</dbReference>
<dbReference type="NCBIfam" id="TIGR00198">
    <property type="entry name" value="cat_per_HPI"/>
    <property type="match status" value="1"/>
</dbReference>
<dbReference type="NCBIfam" id="NF011635">
    <property type="entry name" value="PRK15061.1"/>
    <property type="match status" value="1"/>
</dbReference>
<dbReference type="PANTHER" id="PTHR30555:SF6">
    <property type="entry name" value="CATALASE-PEROXIDASE"/>
    <property type="match status" value="1"/>
</dbReference>
<dbReference type="PANTHER" id="PTHR30555">
    <property type="entry name" value="HYDROPEROXIDASE I, BIFUNCTIONAL CATALASE-PEROXIDASE"/>
    <property type="match status" value="1"/>
</dbReference>
<dbReference type="Pfam" id="PF00141">
    <property type="entry name" value="peroxidase"/>
    <property type="match status" value="2"/>
</dbReference>
<dbReference type="PRINTS" id="PR00460">
    <property type="entry name" value="BPEROXIDASE"/>
</dbReference>
<dbReference type="PRINTS" id="PR00458">
    <property type="entry name" value="PEROXIDASE"/>
</dbReference>
<dbReference type="SUPFAM" id="SSF48113">
    <property type="entry name" value="Heme-dependent peroxidases"/>
    <property type="match status" value="2"/>
</dbReference>
<dbReference type="PROSITE" id="PS00436">
    <property type="entry name" value="PEROXIDASE_2"/>
    <property type="match status" value="1"/>
</dbReference>
<dbReference type="PROSITE" id="PS50873">
    <property type="entry name" value="PEROXIDASE_4"/>
    <property type="match status" value="1"/>
</dbReference>
<reference key="1">
    <citation type="journal article" date="2008" name="PLoS ONE">
        <title>A recalibrated molecular clock and independent origins for the cholera pandemic clones.</title>
        <authorList>
            <person name="Feng L."/>
            <person name="Reeves P.R."/>
            <person name="Lan R."/>
            <person name="Ren Y."/>
            <person name="Gao C."/>
            <person name="Zhou Z."/>
            <person name="Ren Y."/>
            <person name="Cheng J."/>
            <person name="Wang W."/>
            <person name="Wang J."/>
            <person name="Qian W."/>
            <person name="Li D."/>
            <person name="Wang L."/>
        </authorList>
    </citation>
    <scope>NUCLEOTIDE SEQUENCE [LARGE SCALE GENOMIC DNA]</scope>
    <source>
        <strain>M66-2</strain>
    </source>
</reference>
<name>KATG_VIBCM</name>
<protein>
    <recommendedName>
        <fullName evidence="1">Catalase-peroxidase</fullName>
        <shortName evidence="1">CP</shortName>
        <ecNumber evidence="1">1.11.1.21</ecNumber>
    </recommendedName>
    <alternativeName>
        <fullName evidence="1">Peroxidase/catalase</fullName>
    </alternativeName>
</protein>
<keyword id="KW-0349">Heme</keyword>
<keyword id="KW-0376">Hydrogen peroxide</keyword>
<keyword id="KW-0408">Iron</keyword>
<keyword id="KW-0479">Metal-binding</keyword>
<keyword id="KW-0560">Oxidoreductase</keyword>
<keyword id="KW-0575">Peroxidase</keyword>
<comment type="function">
    <text evidence="1">Bifunctional enzyme with both catalase and broad-spectrum peroxidase activity.</text>
</comment>
<comment type="catalytic activity">
    <reaction evidence="1">
        <text>H2O2 + AH2 = A + 2 H2O</text>
        <dbReference type="Rhea" id="RHEA:30275"/>
        <dbReference type="ChEBI" id="CHEBI:13193"/>
        <dbReference type="ChEBI" id="CHEBI:15377"/>
        <dbReference type="ChEBI" id="CHEBI:16240"/>
        <dbReference type="ChEBI" id="CHEBI:17499"/>
        <dbReference type="EC" id="1.11.1.21"/>
    </reaction>
</comment>
<comment type="catalytic activity">
    <reaction evidence="1">
        <text>2 H2O2 = O2 + 2 H2O</text>
        <dbReference type="Rhea" id="RHEA:20309"/>
        <dbReference type="ChEBI" id="CHEBI:15377"/>
        <dbReference type="ChEBI" id="CHEBI:15379"/>
        <dbReference type="ChEBI" id="CHEBI:16240"/>
        <dbReference type="EC" id="1.11.1.21"/>
    </reaction>
</comment>
<comment type="cofactor">
    <cofactor evidence="1">
        <name>heme b</name>
        <dbReference type="ChEBI" id="CHEBI:60344"/>
    </cofactor>
    <text evidence="1">Binds 1 heme b (iron(II)-protoporphyrin IX) group per dimer.</text>
</comment>
<comment type="subunit">
    <text evidence="1">Homodimer or homotetramer.</text>
</comment>
<comment type="PTM">
    <text evidence="1">Formation of the three residue Trp-Tyr-Met cross-link is important for the catalase, but not the peroxidase activity of the enzyme.</text>
</comment>
<comment type="similarity">
    <text evidence="1">Belongs to the peroxidase family. Peroxidase/catalase subfamily.</text>
</comment>
<evidence type="ECO:0000255" key="1">
    <source>
        <dbReference type="HAMAP-Rule" id="MF_01961"/>
    </source>
</evidence>
<proteinExistence type="inferred from homology"/>